<evidence type="ECO:0000255" key="1">
    <source>
        <dbReference type="HAMAP-Rule" id="MF_01304"/>
    </source>
</evidence>
<comment type="subcellular location">
    <subcellularLocation>
        <location evidence="1">Periplasm</location>
    </subcellularLocation>
</comment>
<comment type="similarity">
    <text evidence="1">Belongs to the UPF0194 family.</text>
</comment>
<dbReference type="EMBL" id="CU928158">
    <property type="protein sequence ID" value="CAQ89814.1"/>
    <property type="molecule type" value="Genomic_DNA"/>
</dbReference>
<dbReference type="SMR" id="B7LJW4"/>
<dbReference type="KEGG" id="efe:EFER_2313"/>
<dbReference type="HOGENOM" id="CLU_018816_6_3_6"/>
<dbReference type="Proteomes" id="UP000000745">
    <property type="component" value="Chromosome"/>
</dbReference>
<dbReference type="GO" id="GO:0042597">
    <property type="term" value="C:periplasmic space"/>
    <property type="evidence" value="ECO:0007669"/>
    <property type="project" value="UniProtKB-SubCell"/>
</dbReference>
<dbReference type="FunFam" id="1.10.287.470:FF:000004">
    <property type="entry name" value="UPF0194 membrane protein YbhG"/>
    <property type="match status" value="1"/>
</dbReference>
<dbReference type="FunFam" id="2.40.30.170:FF:000005">
    <property type="entry name" value="UPF0194 membrane protein YbhG"/>
    <property type="match status" value="1"/>
</dbReference>
<dbReference type="FunFam" id="2.40.50.100:FF:000025">
    <property type="entry name" value="UPF0194 membrane protein YbhG"/>
    <property type="match status" value="1"/>
</dbReference>
<dbReference type="Gene3D" id="2.40.30.170">
    <property type="match status" value="1"/>
</dbReference>
<dbReference type="Gene3D" id="2.40.50.100">
    <property type="match status" value="2"/>
</dbReference>
<dbReference type="Gene3D" id="1.10.287.470">
    <property type="entry name" value="Helix hairpin bin"/>
    <property type="match status" value="1"/>
</dbReference>
<dbReference type="HAMAP" id="MF_01304">
    <property type="entry name" value="UPF0194"/>
    <property type="match status" value="1"/>
</dbReference>
<dbReference type="InterPro" id="IPR032317">
    <property type="entry name" value="CusB_D23"/>
</dbReference>
<dbReference type="InterPro" id="IPR022936">
    <property type="entry name" value="UPF0194_membrane_YbhG"/>
</dbReference>
<dbReference type="InterPro" id="IPR050465">
    <property type="entry name" value="UPF0194_transport"/>
</dbReference>
<dbReference type="NCBIfam" id="NF002939">
    <property type="entry name" value="PRK03598.1"/>
    <property type="match status" value="1"/>
</dbReference>
<dbReference type="PANTHER" id="PTHR32347">
    <property type="entry name" value="EFFLUX SYSTEM COMPONENT YKNX-RELATED"/>
    <property type="match status" value="1"/>
</dbReference>
<dbReference type="PANTHER" id="PTHR32347:SF29">
    <property type="entry name" value="UPF0194 MEMBRANE PROTEIN YBHG"/>
    <property type="match status" value="1"/>
</dbReference>
<dbReference type="Pfam" id="PF16576">
    <property type="entry name" value="HlyD_D23"/>
    <property type="match status" value="1"/>
</dbReference>
<dbReference type="SUPFAM" id="SSF111369">
    <property type="entry name" value="HlyD-like secretion proteins"/>
    <property type="match status" value="2"/>
</dbReference>
<dbReference type="SUPFAM" id="SSF56954">
    <property type="entry name" value="Outer membrane efflux proteins (OEP)"/>
    <property type="match status" value="1"/>
</dbReference>
<gene>
    <name evidence="1" type="primary">ybhG</name>
    <name type="ordered locus">EFER_2313</name>
</gene>
<organism>
    <name type="scientific">Escherichia fergusonii (strain ATCC 35469 / DSM 13698 / CCUG 18766 / IAM 14443 / JCM 21226 / LMG 7866 / NBRC 102419 / NCTC 12128 / CDC 0568-73)</name>
    <dbReference type="NCBI Taxonomy" id="585054"/>
    <lineage>
        <taxon>Bacteria</taxon>
        <taxon>Pseudomonadati</taxon>
        <taxon>Pseudomonadota</taxon>
        <taxon>Gammaproteobacteria</taxon>
        <taxon>Enterobacterales</taxon>
        <taxon>Enterobacteriaceae</taxon>
        <taxon>Escherichia</taxon>
    </lineage>
</organism>
<proteinExistence type="inferred from homology"/>
<reference key="1">
    <citation type="journal article" date="2009" name="PLoS Genet.">
        <title>Organised genome dynamics in the Escherichia coli species results in highly diverse adaptive paths.</title>
        <authorList>
            <person name="Touchon M."/>
            <person name="Hoede C."/>
            <person name="Tenaillon O."/>
            <person name="Barbe V."/>
            <person name="Baeriswyl S."/>
            <person name="Bidet P."/>
            <person name="Bingen E."/>
            <person name="Bonacorsi S."/>
            <person name="Bouchier C."/>
            <person name="Bouvet O."/>
            <person name="Calteau A."/>
            <person name="Chiapello H."/>
            <person name="Clermont O."/>
            <person name="Cruveiller S."/>
            <person name="Danchin A."/>
            <person name="Diard M."/>
            <person name="Dossat C."/>
            <person name="Karoui M.E."/>
            <person name="Frapy E."/>
            <person name="Garry L."/>
            <person name="Ghigo J.M."/>
            <person name="Gilles A.M."/>
            <person name="Johnson J."/>
            <person name="Le Bouguenec C."/>
            <person name="Lescat M."/>
            <person name="Mangenot S."/>
            <person name="Martinez-Jehanne V."/>
            <person name="Matic I."/>
            <person name="Nassif X."/>
            <person name="Oztas S."/>
            <person name="Petit M.A."/>
            <person name="Pichon C."/>
            <person name="Rouy Z."/>
            <person name="Ruf C.S."/>
            <person name="Schneider D."/>
            <person name="Tourret J."/>
            <person name="Vacherie B."/>
            <person name="Vallenet D."/>
            <person name="Medigue C."/>
            <person name="Rocha E.P.C."/>
            <person name="Denamur E."/>
        </authorList>
    </citation>
    <scope>NUCLEOTIDE SEQUENCE [LARGE SCALE GENOMIC DNA]</scope>
    <source>
        <strain>ATCC 35469 / DSM 13698 / BCRC 15582 / CCUG 18766 / IAM 14443 / JCM 21226 / LMG 7866 / NBRC 102419 / NCTC 12128 / CDC 0568-73</strain>
    </source>
</reference>
<keyword id="KW-0175">Coiled coil</keyword>
<keyword id="KW-0574">Periplasm</keyword>
<keyword id="KW-0732">Signal</keyword>
<accession>B7LJW4</accession>
<name>YBHG_ESCF3</name>
<protein>
    <recommendedName>
        <fullName evidence="1">UPF0194 membrane protein YbhG</fullName>
    </recommendedName>
</protein>
<feature type="signal peptide" evidence="1">
    <location>
        <begin position="1"/>
        <end position="16"/>
    </location>
</feature>
<feature type="chain" id="PRO_1000140656" description="UPF0194 membrane protein YbhG">
    <location>
        <begin position="17"/>
        <end position="332"/>
    </location>
</feature>
<feature type="coiled-coil region" evidence="1">
    <location>
        <begin position="108"/>
        <end position="209"/>
    </location>
</feature>
<sequence>MMKKPVVIGLAVVVLAAVVAGGYWWYQSRQDNGLTLYGNVDIRTVNLSFRVGGRVESLAVDEGDAIKAGQVLGELDHKPYEIALMQAKAGVSVAQAQYDLMLAGYRDEEIAQAAAAVKQAQAAYDYAQNFYNRQQGLWKSRTISANDLENARSSRDQAQATLKSAQDKLRQYRSGNREQDIAQAKASLEQAQAQLAQAELNLQDSTLIAPSDGTLLTRAVEPGTVLNEGGTVFTVSLTRPVWVRAYVDERNLDQAQPGRKVLLYTDGRPDKPYHGQIGFVSPTAEFTPKTVETPDLRTDLVYRLRIVVTDADDALRQGMPVTVQFGDEAGHE</sequence>